<proteinExistence type="inferred from homology"/>
<protein>
    <recommendedName>
        <fullName evidence="1">6,7-dimethyl-8-ribityllumazine synthase</fullName>
        <shortName evidence="1">DMRL synthase</shortName>
        <shortName evidence="1">LS</shortName>
        <shortName evidence="1">Lumazine synthase</shortName>
        <ecNumber evidence="1">2.5.1.78</ecNumber>
    </recommendedName>
</protein>
<comment type="function">
    <text evidence="1">Catalyzes the formation of 6,7-dimethyl-8-ribityllumazine by condensation of 5-amino-6-(D-ribitylamino)uracil with 3,4-dihydroxy-2-butanone 4-phosphate. This is the penultimate step in the biosynthesis of riboflavin.</text>
</comment>
<comment type="catalytic activity">
    <reaction evidence="1">
        <text>(2S)-2-hydroxy-3-oxobutyl phosphate + 5-amino-6-(D-ribitylamino)uracil = 6,7-dimethyl-8-(1-D-ribityl)lumazine + phosphate + 2 H2O + H(+)</text>
        <dbReference type="Rhea" id="RHEA:26152"/>
        <dbReference type="ChEBI" id="CHEBI:15377"/>
        <dbReference type="ChEBI" id="CHEBI:15378"/>
        <dbReference type="ChEBI" id="CHEBI:15934"/>
        <dbReference type="ChEBI" id="CHEBI:43474"/>
        <dbReference type="ChEBI" id="CHEBI:58201"/>
        <dbReference type="ChEBI" id="CHEBI:58830"/>
        <dbReference type="EC" id="2.5.1.78"/>
    </reaction>
</comment>
<comment type="pathway">
    <text evidence="1">Cofactor biosynthesis; riboflavin biosynthesis; riboflavin from 2-hydroxy-3-oxobutyl phosphate and 5-amino-6-(D-ribitylamino)uracil: step 1/2.</text>
</comment>
<comment type="similarity">
    <text evidence="1">Belongs to the DMRL synthase family.</text>
</comment>
<name>RISB_PARP8</name>
<dbReference type="EC" id="2.5.1.78" evidence="1"/>
<dbReference type="EMBL" id="CP001043">
    <property type="protein sequence ID" value="ACC69808.1"/>
    <property type="molecule type" value="Genomic_DNA"/>
</dbReference>
<dbReference type="RefSeq" id="WP_012400029.1">
    <property type="nucleotide sequence ID" value="NC_010622.1"/>
</dbReference>
<dbReference type="SMR" id="B2JED1"/>
<dbReference type="STRING" id="391038.Bphy_0618"/>
<dbReference type="KEGG" id="bph:Bphy_0618"/>
<dbReference type="eggNOG" id="COG0054">
    <property type="taxonomic scope" value="Bacteria"/>
</dbReference>
<dbReference type="HOGENOM" id="CLU_089358_1_2_4"/>
<dbReference type="OrthoDB" id="9809709at2"/>
<dbReference type="UniPathway" id="UPA00275">
    <property type="reaction ID" value="UER00404"/>
</dbReference>
<dbReference type="Proteomes" id="UP000001192">
    <property type="component" value="Chromosome 1"/>
</dbReference>
<dbReference type="GO" id="GO:0005829">
    <property type="term" value="C:cytosol"/>
    <property type="evidence" value="ECO:0007669"/>
    <property type="project" value="TreeGrafter"/>
</dbReference>
<dbReference type="GO" id="GO:0009349">
    <property type="term" value="C:riboflavin synthase complex"/>
    <property type="evidence" value="ECO:0007669"/>
    <property type="project" value="InterPro"/>
</dbReference>
<dbReference type="GO" id="GO:0000906">
    <property type="term" value="F:6,7-dimethyl-8-ribityllumazine synthase activity"/>
    <property type="evidence" value="ECO:0007669"/>
    <property type="project" value="UniProtKB-UniRule"/>
</dbReference>
<dbReference type="GO" id="GO:0009231">
    <property type="term" value="P:riboflavin biosynthetic process"/>
    <property type="evidence" value="ECO:0007669"/>
    <property type="project" value="UniProtKB-UniRule"/>
</dbReference>
<dbReference type="CDD" id="cd09209">
    <property type="entry name" value="Lumazine_synthase-I"/>
    <property type="match status" value="1"/>
</dbReference>
<dbReference type="Gene3D" id="3.40.50.960">
    <property type="entry name" value="Lumazine/riboflavin synthase"/>
    <property type="match status" value="1"/>
</dbReference>
<dbReference type="HAMAP" id="MF_00178">
    <property type="entry name" value="Lumazine_synth"/>
    <property type="match status" value="1"/>
</dbReference>
<dbReference type="InterPro" id="IPR034964">
    <property type="entry name" value="LS"/>
</dbReference>
<dbReference type="InterPro" id="IPR002180">
    <property type="entry name" value="LS/RS"/>
</dbReference>
<dbReference type="InterPro" id="IPR036467">
    <property type="entry name" value="LS/RS_sf"/>
</dbReference>
<dbReference type="NCBIfam" id="TIGR00114">
    <property type="entry name" value="lumazine-synth"/>
    <property type="match status" value="1"/>
</dbReference>
<dbReference type="PANTHER" id="PTHR21058:SF0">
    <property type="entry name" value="6,7-DIMETHYL-8-RIBITYLLUMAZINE SYNTHASE"/>
    <property type="match status" value="1"/>
</dbReference>
<dbReference type="PANTHER" id="PTHR21058">
    <property type="entry name" value="6,7-DIMETHYL-8-RIBITYLLUMAZINE SYNTHASE DMRL SYNTHASE LUMAZINE SYNTHASE"/>
    <property type="match status" value="1"/>
</dbReference>
<dbReference type="Pfam" id="PF00885">
    <property type="entry name" value="DMRL_synthase"/>
    <property type="match status" value="1"/>
</dbReference>
<dbReference type="SUPFAM" id="SSF52121">
    <property type="entry name" value="Lumazine synthase"/>
    <property type="match status" value="1"/>
</dbReference>
<accession>B2JED1</accession>
<organism>
    <name type="scientific">Paraburkholderia phymatum (strain DSM 17167 / CIP 108236 / LMG 21445 / STM815)</name>
    <name type="common">Burkholderia phymatum</name>
    <dbReference type="NCBI Taxonomy" id="391038"/>
    <lineage>
        <taxon>Bacteria</taxon>
        <taxon>Pseudomonadati</taxon>
        <taxon>Pseudomonadota</taxon>
        <taxon>Betaproteobacteria</taxon>
        <taxon>Burkholderiales</taxon>
        <taxon>Burkholderiaceae</taxon>
        <taxon>Paraburkholderia</taxon>
    </lineage>
</organism>
<keyword id="KW-1185">Reference proteome</keyword>
<keyword id="KW-0686">Riboflavin biosynthesis</keyword>
<keyword id="KW-0808">Transferase</keyword>
<reference key="1">
    <citation type="journal article" date="2014" name="Stand. Genomic Sci.">
        <title>Complete genome sequence of Burkholderia phymatum STM815(T), a broad host range and efficient nitrogen-fixing symbiont of Mimosa species.</title>
        <authorList>
            <person name="Moulin L."/>
            <person name="Klonowska A."/>
            <person name="Caroline B."/>
            <person name="Booth K."/>
            <person name="Vriezen J.A."/>
            <person name="Melkonian R."/>
            <person name="James E.K."/>
            <person name="Young J.P."/>
            <person name="Bena G."/>
            <person name="Hauser L."/>
            <person name="Land M."/>
            <person name="Kyrpides N."/>
            <person name="Bruce D."/>
            <person name="Chain P."/>
            <person name="Copeland A."/>
            <person name="Pitluck S."/>
            <person name="Woyke T."/>
            <person name="Lizotte-Waniewski M."/>
            <person name="Bristow J."/>
            <person name="Riley M."/>
        </authorList>
    </citation>
    <scope>NUCLEOTIDE SEQUENCE [LARGE SCALE GENOMIC DNA]</scope>
    <source>
        <strain>DSM 17167 / CIP 108236 / LMG 21445 / STM815</strain>
    </source>
</reference>
<sequence>MEIGQYQPNLDGDGLRIGIVQSRFNEPVCNGLADACIEELERLGVTGEDVLLVTVPGALEIPLALQKLAESGQFDALIALGAVIRGETYHFELVSNESGSGISRIALDFGIPVANAVLTTENDEQAVARMTEKGRDAARTAVEMANLAVALEQLDGDEDDEGEGEDDEEERA</sequence>
<feature type="chain" id="PRO_1000098168" description="6,7-dimethyl-8-ribityllumazine synthase">
    <location>
        <begin position="1"/>
        <end position="172"/>
    </location>
</feature>
<feature type="region of interest" description="Disordered" evidence="2">
    <location>
        <begin position="150"/>
        <end position="172"/>
    </location>
</feature>
<feature type="compositionally biased region" description="Acidic residues" evidence="2">
    <location>
        <begin position="154"/>
        <end position="172"/>
    </location>
</feature>
<feature type="active site" description="Proton donor" evidence="1">
    <location>
        <position position="90"/>
    </location>
</feature>
<feature type="binding site" evidence="1">
    <location>
        <position position="24"/>
    </location>
    <ligand>
        <name>5-amino-6-(D-ribitylamino)uracil</name>
        <dbReference type="ChEBI" id="CHEBI:15934"/>
    </ligand>
</feature>
<feature type="binding site" evidence="1">
    <location>
        <begin position="58"/>
        <end position="60"/>
    </location>
    <ligand>
        <name>5-amino-6-(D-ribitylamino)uracil</name>
        <dbReference type="ChEBI" id="CHEBI:15934"/>
    </ligand>
</feature>
<feature type="binding site" evidence="1">
    <location>
        <begin position="82"/>
        <end position="84"/>
    </location>
    <ligand>
        <name>5-amino-6-(D-ribitylamino)uracil</name>
        <dbReference type="ChEBI" id="CHEBI:15934"/>
    </ligand>
</feature>
<feature type="binding site" evidence="1">
    <location>
        <begin position="87"/>
        <end position="88"/>
    </location>
    <ligand>
        <name>(2S)-2-hydroxy-3-oxobutyl phosphate</name>
        <dbReference type="ChEBI" id="CHEBI:58830"/>
    </ligand>
</feature>
<feature type="binding site" evidence="1">
    <location>
        <position position="115"/>
    </location>
    <ligand>
        <name>5-amino-6-(D-ribitylamino)uracil</name>
        <dbReference type="ChEBI" id="CHEBI:15934"/>
    </ligand>
</feature>
<feature type="binding site" evidence="1">
    <location>
        <position position="129"/>
    </location>
    <ligand>
        <name>(2S)-2-hydroxy-3-oxobutyl phosphate</name>
        <dbReference type="ChEBI" id="CHEBI:58830"/>
    </ligand>
</feature>
<gene>
    <name evidence="1" type="primary">ribH</name>
    <name type="ordered locus">Bphy_0618</name>
</gene>
<evidence type="ECO:0000255" key="1">
    <source>
        <dbReference type="HAMAP-Rule" id="MF_00178"/>
    </source>
</evidence>
<evidence type="ECO:0000256" key="2">
    <source>
        <dbReference type="SAM" id="MobiDB-lite"/>
    </source>
</evidence>